<proteinExistence type="evidence at protein level"/>
<organism>
    <name type="scientific">Arabidopsis thaliana</name>
    <name type="common">Mouse-ear cress</name>
    <dbReference type="NCBI Taxonomy" id="3702"/>
    <lineage>
        <taxon>Eukaryota</taxon>
        <taxon>Viridiplantae</taxon>
        <taxon>Streptophyta</taxon>
        <taxon>Embryophyta</taxon>
        <taxon>Tracheophyta</taxon>
        <taxon>Spermatophyta</taxon>
        <taxon>Magnoliopsida</taxon>
        <taxon>eudicotyledons</taxon>
        <taxon>Gunneridae</taxon>
        <taxon>Pentapetalae</taxon>
        <taxon>rosids</taxon>
        <taxon>malvids</taxon>
        <taxon>Brassicales</taxon>
        <taxon>Brassicaceae</taxon>
        <taxon>Camelineae</taxon>
        <taxon>Arabidopsis</taxon>
    </lineage>
</organism>
<feature type="chain" id="PRO_0000161808" description="Pantothenate kinase 1">
    <location>
        <begin position="1"/>
        <end position="383"/>
    </location>
</feature>
<sequence>MDPTQISHLALDIGGTLIKLVYFSANGDYSEESRNGCSVVKGRLCFAKFETRKIDDCLEFIRFNILHHSGVQQPNGEGHDKLYVKATGGGAFKFADLFKEKLGILFDKEDEMCSLVGGVNFLLKTVPREAFTYLDGQKKFVEIDHNDLYPYLLVNIGSGVSMIKVDGDGKYERISGTSLGGGTFLGLGKLLTKCKSFDELLELSHHGNNRVIDMLVGDIYGGTDYSKIGLSSTAIASSFGKAISDGKELEDYQPEDVARSLLRMISNNIGQIAYLNALRFGLKRIFFGGFFIRGLEYTMDTISVAVHFWSRGEAKAMFLRHEGFLGALGAFTSYNDQSHNDLKPHHHTVQRAILNCSGHNFRHIPVTSNLNESETIECSINLV</sequence>
<gene>
    <name type="primary">PANK1</name>
    <name type="synonym">COAA</name>
    <name type="ordered locus">At1g60440</name>
    <name type="ORF">T13D8.31</name>
</gene>
<evidence type="ECO:0000250" key="1"/>
<evidence type="ECO:0000269" key="2">
    <source>
    </source>
</evidence>
<evidence type="ECO:0000269" key="3">
    <source>
    </source>
</evidence>
<evidence type="ECO:0000303" key="4">
    <source>
    </source>
</evidence>
<evidence type="ECO:0000303" key="5">
    <source>
    </source>
</evidence>
<evidence type="ECO:0000305" key="6"/>
<comment type="function">
    <text evidence="2 3">Catalyzes the phosphorylation of pantothenate the first step in CoA biosynthesis (PubMed:12860978). May play a role in the physiological regulation of the intracellular CoA concentration (PubMed:16897480). Functionally redudant with PANK2 (PubMed:16897480).</text>
</comment>
<comment type="catalytic activity">
    <reaction evidence="2">
        <text>(R)-pantothenate + ATP = (R)-4'-phosphopantothenate + ADP + H(+)</text>
        <dbReference type="Rhea" id="RHEA:16373"/>
        <dbReference type="ChEBI" id="CHEBI:10986"/>
        <dbReference type="ChEBI" id="CHEBI:15378"/>
        <dbReference type="ChEBI" id="CHEBI:29032"/>
        <dbReference type="ChEBI" id="CHEBI:30616"/>
        <dbReference type="ChEBI" id="CHEBI:456216"/>
        <dbReference type="EC" id="2.7.1.33"/>
    </reaction>
    <physiologicalReaction direction="left-to-right" evidence="2">
        <dbReference type="Rhea" id="RHEA:16374"/>
    </physiologicalReaction>
</comment>
<comment type="activity regulation">
    <text evidence="1">Regulated by feedback inhibition by malonyl-CoA.</text>
</comment>
<comment type="pathway">
    <text evidence="2">Cofactor biosynthesis; coenzyme A biosynthesis; CoA from (R)-pantothenate: step 1/5.</text>
</comment>
<comment type="tissue specificity">
    <text evidence="3">Highly expressed in leaves and developing seeds. Expressed in roots, stems and flowers.</text>
</comment>
<comment type="disruption phenotype">
    <text evidence="3">No visible phenotype under normal growth conditions, but homozygous double mutants pank1-1 and pank2-1 are embryonic lethal.</text>
</comment>
<comment type="similarity">
    <text evidence="6">Belongs to the type II pantothenate kinase family.</text>
</comment>
<comment type="sequence caution" evidence="6">
    <conflict type="erroneous gene model prediction">
        <sequence resource="EMBL-CDS" id="AAC24069"/>
    </conflict>
</comment>
<protein>
    <recommendedName>
        <fullName evidence="5">Pantothenate kinase 1</fullName>
        <shortName evidence="5">AtPANK1</shortName>
        <ecNumber evidence="2">2.7.1.33</ecNumber>
    </recommendedName>
    <alternativeName>
        <fullName evidence="4">AtCoaA</fullName>
    </alternativeName>
    <alternativeName>
        <fullName evidence="5">Pantothenic acid kinase 1</fullName>
    </alternativeName>
</protein>
<accession>O80765</accession>
<accession>Q0WNV9</accession>
<accession>Q66GL8</accession>
<name>PANK1_ARATH</name>
<reference key="1">
    <citation type="journal article" date="2003" name="J. Biol. Chem.">
        <title>4'-phosphopantetheine and coenzyme A biosynthesis in plants.</title>
        <authorList>
            <person name="Kupke T."/>
            <person name="Hernandez-Acosta P."/>
            <person name="Culianez-Macia F.A."/>
        </authorList>
    </citation>
    <scope>NUCLEOTIDE SEQUENCE [MRNA]</scope>
    <scope>FUNCTION</scope>
    <scope>CATALYTIC ACTIVITY</scope>
    <scope>PATHWAY</scope>
    <source>
        <strain>cv. Columbia</strain>
    </source>
</reference>
<reference key="2">
    <citation type="journal article" date="2000" name="Nature">
        <title>Sequence and analysis of chromosome 1 of the plant Arabidopsis thaliana.</title>
        <authorList>
            <person name="Theologis A."/>
            <person name="Ecker J.R."/>
            <person name="Palm C.J."/>
            <person name="Federspiel N.A."/>
            <person name="Kaul S."/>
            <person name="White O."/>
            <person name="Alonso J."/>
            <person name="Altafi H."/>
            <person name="Araujo R."/>
            <person name="Bowman C.L."/>
            <person name="Brooks S.Y."/>
            <person name="Buehler E."/>
            <person name="Chan A."/>
            <person name="Chao Q."/>
            <person name="Chen H."/>
            <person name="Cheuk R.F."/>
            <person name="Chin C.W."/>
            <person name="Chung M.K."/>
            <person name="Conn L."/>
            <person name="Conway A.B."/>
            <person name="Conway A.R."/>
            <person name="Creasy T.H."/>
            <person name="Dewar K."/>
            <person name="Dunn P."/>
            <person name="Etgu P."/>
            <person name="Feldblyum T.V."/>
            <person name="Feng J.-D."/>
            <person name="Fong B."/>
            <person name="Fujii C.Y."/>
            <person name="Gill J.E."/>
            <person name="Goldsmith A.D."/>
            <person name="Haas B."/>
            <person name="Hansen N.F."/>
            <person name="Hughes B."/>
            <person name="Huizar L."/>
            <person name="Hunter J.L."/>
            <person name="Jenkins J."/>
            <person name="Johnson-Hopson C."/>
            <person name="Khan S."/>
            <person name="Khaykin E."/>
            <person name="Kim C.J."/>
            <person name="Koo H.L."/>
            <person name="Kremenetskaia I."/>
            <person name="Kurtz D.B."/>
            <person name="Kwan A."/>
            <person name="Lam B."/>
            <person name="Langin-Hooper S."/>
            <person name="Lee A."/>
            <person name="Lee J.M."/>
            <person name="Lenz C.A."/>
            <person name="Li J.H."/>
            <person name="Li Y.-P."/>
            <person name="Lin X."/>
            <person name="Liu S.X."/>
            <person name="Liu Z.A."/>
            <person name="Luros J.S."/>
            <person name="Maiti R."/>
            <person name="Marziali A."/>
            <person name="Militscher J."/>
            <person name="Miranda M."/>
            <person name="Nguyen M."/>
            <person name="Nierman W.C."/>
            <person name="Osborne B.I."/>
            <person name="Pai G."/>
            <person name="Peterson J."/>
            <person name="Pham P.K."/>
            <person name="Rizzo M."/>
            <person name="Rooney T."/>
            <person name="Rowley D."/>
            <person name="Sakano H."/>
            <person name="Salzberg S.L."/>
            <person name="Schwartz J.R."/>
            <person name="Shinn P."/>
            <person name="Southwick A.M."/>
            <person name="Sun H."/>
            <person name="Tallon L.J."/>
            <person name="Tambunga G."/>
            <person name="Toriumi M.J."/>
            <person name="Town C.D."/>
            <person name="Utterback T."/>
            <person name="Van Aken S."/>
            <person name="Vaysberg M."/>
            <person name="Vysotskaia V.S."/>
            <person name="Walker M."/>
            <person name="Wu D."/>
            <person name="Yu G."/>
            <person name="Fraser C.M."/>
            <person name="Venter J.C."/>
            <person name="Davis R.W."/>
        </authorList>
    </citation>
    <scope>NUCLEOTIDE SEQUENCE [LARGE SCALE GENOMIC DNA]</scope>
    <source>
        <strain>cv. Columbia</strain>
    </source>
</reference>
<reference key="3">
    <citation type="journal article" date="2017" name="Plant J.">
        <title>Araport11: a complete reannotation of the Arabidopsis thaliana reference genome.</title>
        <authorList>
            <person name="Cheng C.Y."/>
            <person name="Krishnakumar V."/>
            <person name="Chan A.P."/>
            <person name="Thibaud-Nissen F."/>
            <person name="Schobel S."/>
            <person name="Town C.D."/>
        </authorList>
    </citation>
    <scope>GENOME REANNOTATION</scope>
    <source>
        <strain>cv. Columbia</strain>
    </source>
</reference>
<reference key="4">
    <citation type="submission" date="2004-08" db="EMBL/GenBank/DDBJ databases">
        <title>Arabidopsis ORF clones.</title>
        <authorList>
            <person name="Cheuk R.F."/>
            <person name="Chen H."/>
            <person name="Kim C.J."/>
            <person name="Shinn P."/>
            <person name="Ecker J.R."/>
        </authorList>
    </citation>
    <scope>NUCLEOTIDE SEQUENCE [LARGE SCALE MRNA]</scope>
    <source>
        <strain>cv. Columbia</strain>
    </source>
</reference>
<reference key="5">
    <citation type="submission" date="2006-07" db="EMBL/GenBank/DDBJ databases">
        <title>Large-scale analysis of RIKEN Arabidopsis full-length (RAFL) cDNAs.</title>
        <authorList>
            <person name="Totoki Y."/>
            <person name="Seki M."/>
            <person name="Ishida J."/>
            <person name="Nakajima M."/>
            <person name="Enju A."/>
            <person name="Kamiya A."/>
            <person name="Narusaka M."/>
            <person name="Shin-i T."/>
            <person name="Nakagawa M."/>
            <person name="Sakamoto N."/>
            <person name="Oishi K."/>
            <person name="Kohara Y."/>
            <person name="Kobayashi M."/>
            <person name="Toyoda A."/>
            <person name="Sakaki Y."/>
            <person name="Sakurai T."/>
            <person name="Iida K."/>
            <person name="Akiyama K."/>
            <person name="Satou M."/>
            <person name="Toyoda T."/>
            <person name="Konagaya A."/>
            <person name="Carninci P."/>
            <person name="Kawai J."/>
            <person name="Hayashizaki Y."/>
            <person name="Shinozaki K."/>
        </authorList>
    </citation>
    <scope>NUCLEOTIDE SEQUENCE [LARGE SCALE MRNA]</scope>
    <source>
        <strain>cv. Columbia</strain>
    </source>
</reference>
<reference key="6">
    <citation type="journal article" date="2006" name="Plant Mol. Biol.">
        <title>Plant coenzyme A biosynthesis: characterization of two pantothenate kinases from Arabidopsis.</title>
        <authorList>
            <person name="Tilton G.B."/>
            <person name="Wedemeyer W.J."/>
            <person name="Browse J."/>
            <person name="Ohlrogge J."/>
        </authorList>
    </citation>
    <scope>FUNCTION</scope>
    <scope>TISSUE SPECIFICITY</scope>
    <scope>DISRUPTION PHENOTYPE</scope>
</reference>
<keyword id="KW-0067">ATP-binding</keyword>
<keyword id="KW-0173">Coenzyme A biosynthesis</keyword>
<keyword id="KW-0418">Kinase</keyword>
<keyword id="KW-0547">Nucleotide-binding</keyword>
<keyword id="KW-1185">Reference proteome</keyword>
<keyword id="KW-0808">Transferase</keyword>
<dbReference type="EC" id="2.7.1.33" evidence="2"/>
<dbReference type="EMBL" id="AC004473">
    <property type="protein sequence ID" value="AAC24069.1"/>
    <property type="status" value="ALT_SEQ"/>
    <property type="molecule type" value="Genomic_DNA"/>
</dbReference>
<dbReference type="EMBL" id="CP002684">
    <property type="protein sequence ID" value="AEE33687.1"/>
    <property type="molecule type" value="Genomic_DNA"/>
</dbReference>
<dbReference type="EMBL" id="BT011005">
    <property type="protein sequence ID" value="AAR25641.1"/>
    <property type="molecule type" value="mRNA"/>
</dbReference>
<dbReference type="EMBL" id="BT015384">
    <property type="protein sequence ID" value="AAU05507.1"/>
    <property type="molecule type" value="mRNA"/>
</dbReference>
<dbReference type="EMBL" id="AK229327">
    <property type="protein sequence ID" value="BAF01190.1"/>
    <property type="molecule type" value="mRNA"/>
</dbReference>
<dbReference type="RefSeq" id="NP_176247.2">
    <property type="nucleotide sequence ID" value="NM_104731.5"/>
</dbReference>
<dbReference type="SMR" id="O80765"/>
<dbReference type="BioGRID" id="27563">
    <property type="interactions" value="1"/>
</dbReference>
<dbReference type="FunCoup" id="O80765">
    <property type="interactions" value="4633"/>
</dbReference>
<dbReference type="STRING" id="3702.O80765"/>
<dbReference type="iPTMnet" id="O80765"/>
<dbReference type="PaxDb" id="3702-AT1G60440.1"/>
<dbReference type="ProteomicsDB" id="236324"/>
<dbReference type="DNASU" id="842339"/>
<dbReference type="EnsemblPlants" id="AT1G60440.1">
    <property type="protein sequence ID" value="AT1G60440.1"/>
    <property type="gene ID" value="AT1G60440"/>
</dbReference>
<dbReference type="GeneID" id="842339"/>
<dbReference type="Gramene" id="AT1G60440.1">
    <property type="protein sequence ID" value="AT1G60440.1"/>
    <property type="gene ID" value="AT1G60440"/>
</dbReference>
<dbReference type="KEGG" id="ath:AT1G60440"/>
<dbReference type="Araport" id="AT1G60440"/>
<dbReference type="TAIR" id="AT1G60440">
    <property type="gene designation" value="PANK1"/>
</dbReference>
<dbReference type="eggNOG" id="KOG2201">
    <property type="taxonomic scope" value="Eukaryota"/>
</dbReference>
<dbReference type="HOGENOM" id="CLU_011154_3_0_1"/>
<dbReference type="InParanoid" id="O80765"/>
<dbReference type="OMA" id="WSKGAKQ"/>
<dbReference type="PhylomeDB" id="O80765"/>
<dbReference type="UniPathway" id="UPA00241">
    <property type="reaction ID" value="UER00352"/>
</dbReference>
<dbReference type="PRO" id="PR:O80765"/>
<dbReference type="Proteomes" id="UP000006548">
    <property type="component" value="Chromosome 1"/>
</dbReference>
<dbReference type="ExpressionAtlas" id="O80765">
    <property type="expression patterns" value="baseline and differential"/>
</dbReference>
<dbReference type="GO" id="GO:0005524">
    <property type="term" value="F:ATP binding"/>
    <property type="evidence" value="ECO:0007669"/>
    <property type="project" value="UniProtKB-KW"/>
</dbReference>
<dbReference type="GO" id="GO:0004594">
    <property type="term" value="F:pantothenate kinase activity"/>
    <property type="evidence" value="ECO:0000314"/>
    <property type="project" value="TAIR"/>
</dbReference>
<dbReference type="GO" id="GO:0015937">
    <property type="term" value="P:coenzyme A biosynthetic process"/>
    <property type="evidence" value="ECO:0000314"/>
    <property type="project" value="TAIR"/>
</dbReference>
<dbReference type="CDD" id="cd24123">
    <property type="entry name" value="ASKHA_NBD_PanK-II_Pank4"/>
    <property type="match status" value="1"/>
</dbReference>
<dbReference type="FunFam" id="3.30.420.40:FF:000442">
    <property type="entry name" value="Pantothenate kinase 1"/>
    <property type="match status" value="1"/>
</dbReference>
<dbReference type="FunFam" id="3.30.420.40:FF:000273">
    <property type="entry name" value="Pantothenate kinase 2"/>
    <property type="match status" value="1"/>
</dbReference>
<dbReference type="Gene3D" id="3.30.420.40">
    <property type="match status" value="2"/>
</dbReference>
<dbReference type="InterPro" id="IPR043129">
    <property type="entry name" value="ATPase_NBD"/>
</dbReference>
<dbReference type="InterPro" id="IPR004567">
    <property type="entry name" value="Type_II_PanK"/>
</dbReference>
<dbReference type="NCBIfam" id="TIGR00555">
    <property type="entry name" value="panK_eukar"/>
    <property type="match status" value="1"/>
</dbReference>
<dbReference type="PANTHER" id="PTHR12280">
    <property type="entry name" value="PANTOTHENATE KINASE"/>
    <property type="match status" value="1"/>
</dbReference>
<dbReference type="PANTHER" id="PTHR12280:SF34">
    <property type="entry name" value="PANTOTHENATE KINASE 1"/>
    <property type="match status" value="1"/>
</dbReference>
<dbReference type="Pfam" id="PF03630">
    <property type="entry name" value="Fumble"/>
    <property type="match status" value="1"/>
</dbReference>
<dbReference type="SUPFAM" id="SSF53067">
    <property type="entry name" value="Actin-like ATPase domain"/>
    <property type="match status" value="2"/>
</dbReference>